<evidence type="ECO:0000255" key="1">
    <source>
        <dbReference type="HAMAP-Rule" id="MF_02230"/>
    </source>
</evidence>
<evidence type="ECO:0000305" key="2"/>
<name>R15PI_PYRFU</name>
<gene>
    <name type="ordered locus">PF0122</name>
</gene>
<accession>Q8U4G6</accession>
<sequence length="324" mass="36490">MGAMIVREVFEIAEKIKNMEIRGAGEIARAVAEALKIQAEKSKAKTSHELWKELKEASKILYNTRPTAVSLPNALRYVMYRGKIAYTSNADLESLRYTIINAAKEFIYNSEKAIERIGEIGAKRIEDGDVIMTHCHSKAAISVMKTAFDQGKDIKVIVTETRPRWQGKITAKELASYGIPVIYIVDGAARHYMKMTDKVVMGADSITANGAVINQIGTALIALTAKEHRVWVMIAAETYKFHPETMLGQLVEIEMRDPTEVVPKEELETWPKNIEVLNPAFDVTPPEYIDVIITEKGVIPPYAAIDILKEEFGWAFKYREPWED</sequence>
<proteinExistence type="inferred from homology"/>
<reference key="1">
    <citation type="journal article" date="1999" name="Genetics">
        <title>Divergence of the hyperthermophilic archaea Pyrococcus furiosus and P. horikoshii inferred from complete genomic sequences.</title>
        <authorList>
            <person name="Maeder D.L."/>
            <person name="Weiss R.B."/>
            <person name="Dunn D.M."/>
            <person name="Cherry J.L."/>
            <person name="Gonzalez J.M."/>
            <person name="DiRuggiero J."/>
            <person name="Robb F.T."/>
        </authorList>
    </citation>
    <scope>NUCLEOTIDE SEQUENCE [LARGE SCALE GENOMIC DNA]</scope>
    <source>
        <strain>ATCC 43587 / DSM 3638 / JCM 8422 / Vc1</strain>
    </source>
</reference>
<feature type="chain" id="PRO_0000156105" description="Ribose 1,5-bisphosphate isomerase">
    <location>
        <begin position="1"/>
        <end position="324"/>
    </location>
</feature>
<feature type="active site" description="Proton acceptor" evidence="1">
    <location>
        <position position="135"/>
    </location>
</feature>
<feature type="active site" description="Proton donor" evidence="1">
    <location>
        <position position="204"/>
    </location>
</feature>
<feature type="binding site" evidence="1">
    <location>
        <begin position="22"/>
        <end position="25"/>
    </location>
    <ligand>
        <name>substrate</name>
    </ligand>
</feature>
<feature type="binding site" evidence="1">
    <location>
        <position position="65"/>
    </location>
    <ligand>
        <name>substrate</name>
    </ligand>
</feature>
<feature type="binding site" evidence="1">
    <location>
        <begin position="137"/>
        <end position="139"/>
    </location>
    <ligand>
        <name>substrate</name>
    </ligand>
</feature>
<feature type="binding site" evidence="1">
    <location>
        <position position="240"/>
    </location>
    <ligand>
        <name>substrate</name>
    </ligand>
</feature>
<comment type="function">
    <text evidence="1">Catalyzes the isomerization of ribose 1,5-bisphosphate (R15P) to ribulose 1,5-bisphosphate (RuBP), the CO(2) acceptor and substrate for RubisCO. Functions in an archaeal AMP degradation pathway, together with AMP phosphorylase and RubisCO.</text>
</comment>
<comment type="catalytic activity">
    <reaction evidence="1">
        <text>alpha-D-ribose 1,5-bisphosphate = D-ribulose 1,5-bisphosphate</text>
        <dbReference type="Rhea" id="RHEA:32243"/>
        <dbReference type="ChEBI" id="CHEBI:57870"/>
        <dbReference type="ChEBI" id="CHEBI:68688"/>
        <dbReference type="EC" id="5.3.1.29"/>
    </reaction>
</comment>
<comment type="miscellaneous">
    <text evidence="1">Reaction proceeds via a cis-phosphoenolate intermediate.</text>
</comment>
<comment type="similarity">
    <text evidence="1 2">Belongs to the eIF-2B alpha/beta/delta subunits family. R15P isomerase subfamily.</text>
</comment>
<comment type="sequence caution" evidence="2">
    <conflict type="erroneous initiation">
        <sequence resource="EMBL-CDS" id="AAL80246"/>
    </conflict>
    <text>Truncated N-terminus.</text>
</comment>
<protein>
    <recommendedName>
        <fullName evidence="1">Ribose 1,5-bisphosphate isomerase</fullName>
        <shortName evidence="1">R15P isomerase</shortName>
        <shortName evidence="1">R15Pi</shortName>
        <ecNumber evidence="1">5.3.1.29</ecNumber>
    </recommendedName>
    <alternativeName>
        <fullName evidence="1">Ribulose 1,5-bisphosphate synthase</fullName>
        <shortName evidence="1">RuBP synthase</shortName>
    </alternativeName>
</protein>
<dbReference type="EC" id="5.3.1.29" evidence="1"/>
<dbReference type="EMBL" id="AE009950">
    <property type="protein sequence ID" value="AAL80246.1"/>
    <property type="status" value="ALT_INIT"/>
    <property type="molecule type" value="Genomic_DNA"/>
</dbReference>
<dbReference type="RefSeq" id="WP_011011234.1">
    <property type="nucleotide sequence ID" value="NC_003413.1"/>
</dbReference>
<dbReference type="SMR" id="Q8U4G6"/>
<dbReference type="STRING" id="186497.PF0122"/>
<dbReference type="PaxDb" id="186497-PF0122"/>
<dbReference type="GeneID" id="1467951"/>
<dbReference type="KEGG" id="pfu:PF0122"/>
<dbReference type="PATRIC" id="fig|186497.12.peg.127"/>
<dbReference type="eggNOG" id="arCOG01124">
    <property type="taxonomic scope" value="Archaea"/>
</dbReference>
<dbReference type="HOGENOM" id="CLU_016218_2_1_2"/>
<dbReference type="OrthoDB" id="27639at2157"/>
<dbReference type="PhylomeDB" id="Q8U4G6"/>
<dbReference type="Proteomes" id="UP000001013">
    <property type="component" value="Chromosome"/>
</dbReference>
<dbReference type="GO" id="GO:0043917">
    <property type="term" value="F:ribose 1,5-bisphosphate isomerase activity"/>
    <property type="evidence" value="ECO:0007669"/>
    <property type="project" value="UniProtKB-UniRule"/>
</dbReference>
<dbReference type="GO" id="GO:0046523">
    <property type="term" value="F:S-methyl-5-thioribose-1-phosphate isomerase activity"/>
    <property type="evidence" value="ECO:0007669"/>
    <property type="project" value="TreeGrafter"/>
</dbReference>
<dbReference type="GO" id="GO:0019509">
    <property type="term" value="P:L-methionine salvage from methylthioadenosine"/>
    <property type="evidence" value="ECO:0007669"/>
    <property type="project" value="TreeGrafter"/>
</dbReference>
<dbReference type="GO" id="GO:0019323">
    <property type="term" value="P:pentose catabolic process"/>
    <property type="evidence" value="ECO:0007669"/>
    <property type="project" value="UniProtKB-UniRule"/>
</dbReference>
<dbReference type="FunFam" id="1.20.120.420:FF:000011">
    <property type="entry name" value="Ribose 1,5-bisphosphate isomerase"/>
    <property type="match status" value="1"/>
</dbReference>
<dbReference type="FunFam" id="3.40.50.10470:FF:000019">
    <property type="entry name" value="Ribose 1,5-bisphosphate isomerase"/>
    <property type="match status" value="1"/>
</dbReference>
<dbReference type="Gene3D" id="1.20.120.420">
    <property type="entry name" value="translation initiation factor eif-2b, domain 1"/>
    <property type="match status" value="1"/>
</dbReference>
<dbReference type="Gene3D" id="3.40.50.10470">
    <property type="entry name" value="Translation initiation factor eif-2b, domain 2"/>
    <property type="match status" value="1"/>
</dbReference>
<dbReference type="HAMAP" id="MF_02230">
    <property type="entry name" value="R15P_isomerase"/>
    <property type="match status" value="1"/>
</dbReference>
<dbReference type="InterPro" id="IPR000649">
    <property type="entry name" value="IF-2B-related"/>
</dbReference>
<dbReference type="InterPro" id="IPR042529">
    <property type="entry name" value="IF_2B-like_C"/>
</dbReference>
<dbReference type="InterPro" id="IPR011559">
    <property type="entry name" value="Initiation_fac_2B_a/b/d"/>
</dbReference>
<dbReference type="InterPro" id="IPR027363">
    <property type="entry name" value="M1Pi_N"/>
</dbReference>
<dbReference type="InterPro" id="IPR037171">
    <property type="entry name" value="NagB/RpiA_transferase-like"/>
</dbReference>
<dbReference type="InterPro" id="IPR005250">
    <property type="entry name" value="R15Pi"/>
</dbReference>
<dbReference type="NCBIfam" id="TIGR00524">
    <property type="entry name" value="eIF-2B_rel"/>
    <property type="match status" value="1"/>
</dbReference>
<dbReference type="NCBIfam" id="TIGR00511">
    <property type="entry name" value="ribulose_e2b2"/>
    <property type="match status" value="1"/>
</dbReference>
<dbReference type="PANTHER" id="PTHR43475">
    <property type="entry name" value="METHYLTHIORIBOSE-1-PHOSPHATE ISOMERASE"/>
    <property type="match status" value="1"/>
</dbReference>
<dbReference type="PANTHER" id="PTHR43475:SF2">
    <property type="entry name" value="RIBOSE 1,5-BISPHOSPHATE ISOMERASE"/>
    <property type="match status" value="1"/>
</dbReference>
<dbReference type="Pfam" id="PF01008">
    <property type="entry name" value="IF-2B"/>
    <property type="match status" value="1"/>
</dbReference>
<dbReference type="SUPFAM" id="SSF100950">
    <property type="entry name" value="NagB/RpiA/CoA transferase-like"/>
    <property type="match status" value="1"/>
</dbReference>
<organism>
    <name type="scientific">Pyrococcus furiosus (strain ATCC 43587 / DSM 3638 / JCM 8422 / Vc1)</name>
    <dbReference type="NCBI Taxonomy" id="186497"/>
    <lineage>
        <taxon>Archaea</taxon>
        <taxon>Methanobacteriati</taxon>
        <taxon>Methanobacteriota</taxon>
        <taxon>Thermococci</taxon>
        <taxon>Thermococcales</taxon>
        <taxon>Thermococcaceae</taxon>
        <taxon>Pyrococcus</taxon>
    </lineage>
</organism>
<keyword id="KW-0119">Carbohydrate metabolism</keyword>
<keyword id="KW-0413">Isomerase</keyword>
<keyword id="KW-1185">Reference proteome</keyword>